<protein>
    <recommendedName>
        <fullName>Eisosome protein SEG1</fullName>
    </recommendedName>
    <alternativeName>
        <fullName>Stabilizer of eisosome in gossypii protein 1</fullName>
    </alternativeName>
</protein>
<name>SEG1_EREGS</name>
<organism>
    <name type="scientific">Eremothecium gossypii (strain ATCC 10895 / CBS 109.51 / FGSC 9923 / NRRL Y-1056)</name>
    <name type="common">Yeast</name>
    <name type="synonym">Ashbya gossypii</name>
    <dbReference type="NCBI Taxonomy" id="284811"/>
    <lineage>
        <taxon>Eukaryota</taxon>
        <taxon>Fungi</taxon>
        <taxon>Dikarya</taxon>
        <taxon>Ascomycota</taxon>
        <taxon>Saccharomycotina</taxon>
        <taxon>Saccharomycetes</taxon>
        <taxon>Saccharomycetales</taxon>
        <taxon>Saccharomycetaceae</taxon>
        <taxon>Eremothecium</taxon>
    </lineage>
</organism>
<keyword id="KW-1003">Cell membrane</keyword>
<keyword id="KW-0472">Membrane</keyword>
<keyword id="KW-1185">Reference proteome</keyword>
<comment type="function">
    <text evidence="3">Important for the stabilization of eisosomes, large cytoplasmic protein assemblies that localize to specialized domains on the plasma membrane to cluster specific proteins at sites of membrane invaginations.</text>
</comment>
<comment type="subunit">
    <text evidence="1">Component of eisosomes, large cytoplasmic protein assemblies that localize to specialized domains termed MCCs on the plasma membrane.</text>
</comment>
<comment type="subcellular location">
    <subcellularLocation>
        <location evidence="1">Cell membrane</location>
        <topology evidence="1">Peripheral membrane protein</topology>
        <orientation evidence="1">Cytoplasmic side</orientation>
    </subcellularLocation>
    <text evidence="1">Localizes to eisosomes.</text>
</comment>
<comment type="similarity">
    <text evidence="4">Belongs to the SEG1 family.</text>
</comment>
<feature type="chain" id="PRO_0000430247" description="Eisosome protein SEG1">
    <location>
        <begin position="1"/>
        <end position="656"/>
    </location>
</feature>
<feature type="region of interest" description="Disordered" evidence="2">
    <location>
        <begin position="28"/>
        <end position="95"/>
    </location>
</feature>
<feature type="region of interest" description="Disordered" evidence="2">
    <location>
        <begin position="135"/>
        <end position="375"/>
    </location>
</feature>
<feature type="region of interest" description="Disordered" evidence="2">
    <location>
        <begin position="387"/>
        <end position="656"/>
    </location>
</feature>
<feature type="compositionally biased region" description="Basic and acidic residues" evidence="2">
    <location>
        <begin position="66"/>
        <end position="88"/>
    </location>
</feature>
<feature type="compositionally biased region" description="Low complexity" evidence="2">
    <location>
        <begin position="136"/>
        <end position="150"/>
    </location>
</feature>
<feature type="compositionally biased region" description="Low complexity" evidence="2">
    <location>
        <begin position="182"/>
        <end position="191"/>
    </location>
</feature>
<feature type="compositionally biased region" description="Low complexity" evidence="2">
    <location>
        <begin position="206"/>
        <end position="219"/>
    </location>
</feature>
<feature type="compositionally biased region" description="Acidic residues" evidence="2">
    <location>
        <begin position="253"/>
        <end position="262"/>
    </location>
</feature>
<feature type="compositionally biased region" description="Polar residues" evidence="2">
    <location>
        <begin position="351"/>
        <end position="372"/>
    </location>
</feature>
<feature type="compositionally biased region" description="Basic residues" evidence="2">
    <location>
        <begin position="399"/>
        <end position="411"/>
    </location>
</feature>
<feature type="compositionally biased region" description="Polar residues" evidence="2">
    <location>
        <begin position="433"/>
        <end position="463"/>
    </location>
</feature>
<feature type="compositionally biased region" description="Basic and acidic residues" evidence="2">
    <location>
        <begin position="477"/>
        <end position="491"/>
    </location>
</feature>
<feature type="compositionally biased region" description="Polar residues" evidence="2">
    <location>
        <begin position="557"/>
        <end position="572"/>
    </location>
</feature>
<feature type="compositionally biased region" description="Basic residues" evidence="2">
    <location>
        <begin position="588"/>
        <end position="600"/>
    </location>
</feature>
<feature type="compositionally biased region" description="Polar residues" evidence="2">
    <location>
        <begin position="621"/>
        <end position="631"/>
    </location>
</feature>
<feature type="compositionally biased region" description="Basic residues" evidence="2">
    <location>
        <begin position="645"/>
        <end position="656"/>
    </location>
</feature>
<evidence type="ECO:0000250" key="1"/>
<evidence type="ECO:0000256" key="2">
    <source>
        <dbReference type="SAM" id="MobiDB-lite"/>
    </source>
</evidence>
<evidence type="ECO:0000269" key="3">
    <source>
    </source>
</evidence>
<evidence type="ECO:0000305" key="4"/>
<gene>
    <name type="primary">SEG1</name>
    <name type="ordered locus">ABL037C</name>
</gene>
<sequence>MLRKQTPGRARPADVEAVAAVSALGKVMNQDGTALDHSKVRKRESMLPTRGRSGRGGVRRASAESAGRRTRSEDGKAARSARERHMEDEFNAFGGRATAGVAKEVPARGGADDGPVMTTKYVPSPRGLVKVTVPVSAGSSAHSSLRKSASIHTGMNMRHGSGSRRASMTSAGSDAARRQAKSTAESSSARTRSNKPKPRPSGDSHSPSPTTRAPVTPRRTTVKDLVAPPLPEEPEDSVSTSGKGESIVPLNEKEEEQDEQPFDSEANARSSPKTPKQGGHVPALEVSQHGFQTPVPDGPTMAEYLQSADPILSAGATQRQRELEEAEAASTTPDGDRLKIGKSPSPMKSAMKNSPSAGTSKYNRPPLDTSSAADGAYLSLTTAENTRLNAQLSDDKMRKSPTLRQPKRRVSVHSPKTPSAASADRSSKVLRQFSLSKPQGRTLAMNKNNSGEKQAQSPTSPKSNQKKVDPSVLYPREPPKKKSSFERERPQHKNLGFKNLSLRSEASNEFMYQGTLEGEIHQSPGQHVGHETPKKALLSVTAEGWKSRFSDSDSENDSPPFSSNASGSTQPSSHRDSSLAHHGGFGLFKHKDHHGHKPKHSLGASLASAKPHEPQKARLAPTSNRGSNTLSAERPLKNHNSFSGKLKKLFGKKHAT</sequence>
<accession>Q75DQ4</accession>
<dbReference type="EMBL" id="AE016815">
    <property type="protein sequence ID" value="AAS50734.2"/>
    <property type="molecule type" value="Genomic_DNA"/>
</dbReference>
<dbReference type="RefSeq" id="NP_982910.2">
    <property type="nucleotide sequence ID" value="NM_208263.2"/>
</dbReference>
<dbReference type="FunCoup" id="Q75DQ4">
    <property type="interactions" value="88"/>
</dbReference>
<dbReference type="STRING" id="284811.Q75DQ4"/>
<dbReference type="EnsemblFungi" id="AAS50734">
    <property type="protein sequence ID" value="AAS50734"/>
    <property type="gene ID" value="AGOS_ABL037C"/>
</dbReference>
<dbReference type="GeneID" id="4618993"/>
<dbReference type="KEGG" id="ago:AGOS_ABL037C"/>
<dbReference type="eggNOG" id="ENOG502S0GH">
    <property type="taxonomic scope" value="Eukaryota"/>
</dbReference>
<dbReference type="HOGENOM" id="CLU_417941_0_0_1"/>
<dbReference type="InParanoid" id="Q75DQ4"/>
<dbReference type="OMA" id="HEPQKAR"/>
<dbReference type="OrthoDB" id="4085524at2759"/>
<dbReference type="Proteomes" id="UP000000591">
    <property type="component" value="Chromosome II"/>
</dbReference>
<dbReference type="GO" id="GO:0005886">
    <property type="term" value="C:plasma membrane"/>
    <property type="evidence" value="ECO:0007669"/>
    <property type="project" value="UniProtKB-SubCell"/>
</dbReference>
<reference key="1">
    <citation type="journal article" date="2004" name="Science">
        <title>The Ashbya gossypii genome as a tool for mapping the ancient Saccharomyces cerevisiae genome.</title>
        <authorList>
            <person name="Dietrich F.S."/>
            <person name="Voegeli S."/>
            <person name="Brachat S."/>
            <person name="Lerch A."/>
            <person name="Gates K."/>
            <person name="Steiner S."/>
            <person name="Mohr C."/>
            <person name="Poehlmann R."/>
            <person name="Luedi P."/>
            <person name="Choi S."/>
            <person name="Wing R.A."/>
            <person name="Flavier A."/>
            <person name="Gaffney T.D."/>
            <person name="Philippsen P."/>
        </authorList>
    </citation>
    <scope>NUCLEOTIDE SEQUENCE [LARGE SCALE GENOMIC DNA]</scope>
    <source>
        <strain>ATCC 10895 / CBS 109.51 / FGSC 9923 / NRRL Y-1056</strain>
    </source>
</reference>
<reference key="2">
    <citation type="journal article" date="2013" name="G3 (Bethesda)">
        <title>Genomes of Ashbya fungi isolated from insects reveal four mating-type loci, numerous translocations, lack of transposons, and distinct gene duplications.</title>
        <authorList>
            <person name="Dietrich F.S."/>
            <person name="Voegeli S."/>
            <person name="Kuo S."/>
            <person name="Philippsen P."/>
        </authorList>
    </citation>
    <scope>GENOME REANNOTATION</scope>
    <source>
        <strain>ATCC 10895 / CBS 109.51 / FGSC 9923 / NRRL Y-1056</strain>
    </source>
</reference>
<reference key="3">
    <citation type="journal article" date="2011" name="J. Cell Sci.">
        <title>Formation and stability of eisosomes in the filamentous fungus Ashbya gossypii.</title>
        <authorList>
            <person name="Seger S."/>
            <person name="Rischatsch R."/>
            <person name="Philippsen P."/>
        </authorList>
    </citation>
    <scope>FUNCTION</scope>
</reference>
<proteinExistence type="inferred from homology"/>